<comment type="function">
    <text evidence="1 4">Oxidoreductase; part of the gene cluster that mediates the biosynthesis of iso-A82775C, a enylepoxycyclohexane and biosynthetic precursor of the chloropestolide anticancer natural products (PubMed:29384350). Within the cluster, the prenyltransferase iacE prenylates siccayne to generate pestalodiol E, using dimethylallyl diphosphate (DMAPP) as cosubstrate (PubMed:29384350). The probable oxidoreductase iacF is then involved in the epoxidation of pestalodiol F to pestalodiol F, which is further converted to pestalofone A by the short-chain dehydrogenase/reductase iacG (PubMed:29384350). Iso-A82775C is subsequently generated from pestalofone A by the short-chain dehydrogenase/reductase iacC (PubMed:29384350). Iso-A82775C is further condensed with maldoxin via a Diels-Alder reaction to produce the anticancer natural products chloropestolides A to E (Probable).</text>
</comment>
<comment type="pathway">
    <text evidence="1">Secondary metabolite biosynthesis.</text>
</comment>
<comment type="induction">
    <text evidence="1">Expression is co-regulated with the other genes from the iso-A82775C biosynthesis cluster and probably controlled by the cluster-specific transcription factors iacI and iacK.</text>
</comment>
<comment type="disruption phenotype">
    <text evidence="1">Abolishes the production of iso-A82775C, but accumulates pestalodiol E.</text>
</comment>
<comment type="biotechnology">
    <text evidence="1">Iso-A82775C is a precursor for the biosynthesis of the anticancer natural products chloropestolides A to E via a Diesls-Alder reaction with maldoxin (PubMed:29384350). In the absence of the prenyltransferase iacE, siccayne accumulates instead of iso-A82775C and can also be condensed with maldoxin to produce chloropestolides H to K, which show also antibacterial and anticancer properties (PubMed:29384350).</text>
</comment>
<comment type="similarity">
    <text evidence="3">Belongs to the oxidoreductase OpS7 family.</text>
</comment>
<comment type="sequence caution" evidence="3">
    <conflict type="erroneous termination">
        <sequence resource="EMBL-CDS" id="ETS86018"/>
    </conflict>
    <text>Extended C-terminus.</text>
</comment>
<keyword id="KW-0560">Oxidoreductase</keyword>
<keyword id="KW-1185">Reference proteome</keyword>
<name>IACF_PESFW</name>
<feature type="chain" id="PRO_0000451385" description="Oxidoreductase iacF">
    <location>
        <begin position="1"/>
        <end position="204"/>
    </location>
</feature>
<sequence length="204" mass="23563">MVWAWQQWLSPRPQKRTKNTSQVAFYTSENAALYEPLSKPDGNWYVRETHFRENPNVRAGLTGPPLHLHLQQDEYFKVEQGVLGAVKDGVEVAITKNDPVLHIPRGTRHRFWPHPSSTEDLVFTAWADPCKDHDHILDLNFLRNLAGYLADCDSEGLQPSPFQLILFFHEASSILCPPFLNWMPLWLLIWVHNGLAWIAREFLG</sequence>
<organism>
    <name type="scientific">Pestalotiopsis fici (strain W106-1 / CGMCC3.15140)</name>
    <dbReference type="NCBI Taxonomy" id="1229662"/>
    <lineage>
        <taxon>Eukaryota</taxon>
        <taxon>Fungi</taxon>
        <taxon>Dikarya</taxon>
        <taxon>Ascomycota</taxon>
        <taxon>Pezizomycotina</taxon>
        <taxon>Sordariomycetes</taxon>
        <taxon>Xylariomycetidae</taxon>
        <taxon>Amphisphaeriales</taxon>
        <taxon>Sporocadaceae</taxon>
        <taxon>Pestalotiopsis</taxon>
    </lineage>
</organism>
<accession>A0A1J0HSL4</accession>
<accession>W3XIX3</accession>
<dbReference type="EC" id="1.-.-.-" evidence="4"/>
<dbReference type="EMBL" id="KU963195">
    <property type="protein sequence ID" value="APC57598.1"/>
    <property type="molecule type" value="Genomic_DNA"/>
</dbReference>
<dbReference type="EMBL" id="KI912110">
    <property type="protein sequence ID" value="ETS86018.1"/>
    <property type="status" value="ALT_SEQ"/>
    <property type="molecule type" value="Genomic_DNA"/>
</dbReference>
<dbReference type="RefSeq" id="XP_007830815.1">
    <property type="nucleotide sequence ID" value="XM_007832624.1"/>
</dbReference>
<dbReference type="GeneID" id="19269056"/>
<dbReference type="KEGG" id="pfy:PFICI_04043"/>
<dbReference type="eggNOG" id="ENOG502SJU9">
    <property type="taxonomic scope" value="Eukaryota"/>
</dbReference>
<dbReference type="HOGENOM" id="CLU_089363_0_0_1"/>
<dbReference type="InParanoid" id="A0A1J0HSL4"/>
<dbReference type="OrthoDB" id="9976870at2759"/>
<dbReference type="Proteomes" id="UP000030651">
    <property type="component" value="Unassembled WGS sequence"/>
</dbReference>
<dbReference type="GO" id="GO:0016491">
    <property type="term" value="F:oxidoreductase activity"/>
    <property type="evidence" value="ECO:0007669"/>
    <property type="project" value="UniProtKB-KW"/>
</dbReference>
<dbReference type="Gene3D" id="2.60.120.10">
    <property type="entry name" value="Jelly Rolls"/>
    <property type="match status" value="1"/>
</dbReference>
<dbReference type="InterPro" id="IPR014710">
    <property type="entry name" value="RmlC-like_jellyroll"/>
</dbReference>
<dbReference type="InterPro" id="IPR011051">
    <property type="entry name" value="RmlC_Cupin_sf"/>
</dbReference>
<dbReference type="SUPFAM" id="SSF51182">
    <property type="entry name" value="RmlC-like cupins"/>
    <property type="match status" value="1"/>
</dbReference>
<gene>
    <name evidence="2" type="primary">iacF</name>
    <name type="ORF">PFICI_04043</name>
</gene>
<protein>
    <recommendedName>
        <fullName evidence="2">Oxidoreductase iacF</fullName>
        <ecNumber evidence="4">1.-.-.-</ecNumber>
    </recommendedName>
    <alternativeName>
        <fullName evidence="2">Iso-A82775C biosynthesis cluster protein F</fullName>
    </alternativeName>
</protein>
<evidence type="ECO:0000269" key="1">
    <source>
    </source>
</evidence>
<evidence type="ECO:0000303" key="2">
    <source>
    </source>
</evidence>
<evidence type="ECO:0000305" key="3"/>
<evidence type="ECO:0000305" key="4">
    <source>
    </source>
</evidence>
<proteinExistence type="evidence at protein level"/>
<reference key="1">
    <citation type="journal article" date="2018" name="ACS Chem. Biol.">
        <title>Characterization of a prenyltransferase for iso-A82775C biosynthesis and generation of new congeners of chloropestolides.</title>
        <authorList>
            <person name="Pan Y."/>
            <person name="Liu L."/>
            <person name="Guan F."/>
            <person name="Li E."/>
            <person name="Jin J."/>
            <person name="Li J."/>
            <person name="Che Y."/>
            <person name="Liu G."/>
        </authorList>
    </citation>
    <scope>NUCLEOTIDE SEQUENCE [GENOMIC DNA]</scope>
    <scope>FUNCTION</scope>
    <scope>DISRUPTION PHENOTYPE</scope>
    <scope>INDUCTION</scope>
    <scope>PATHWAY</scope>
    <scope>BIOTECHNOLOGY</scope>
    <source>
        <strain>W106-1 / CGMCC3.15140</strain>
    </source>
</reference>
<reference key="2">
    <citation type="journal article" date="2015" name="BMC Genomics">
        <title>Genomic and transcriptomic analysis of the endophytic fungus Pestalotiopsis fici reveals its lifestyle and high potential for synthesis of natural products.</title>
        <authorList>
            <person name="Wang X."/>
            <person name="Zhang X."/>
            <person name="Liu L."/>
            <person name="Xiang M."/>
            <person name="Wang W."/>
            <person name="Sun X."/>
            <person name="Che Y."/>
            <person name="Guo L."/>
            <person name="Liu G."/>
            <person name="Guo L."/>
            <person name="Wang C."/>
            <person name="Yin W.B."/>
            <person name="Stadler M."/>
            <person name="Zhang X."/>
            <person name="Liu X."/>
        </authorList>
    </citation>
    <scope>NUCLEOTIDE SEQUENCE [LARGE SCALE GENOMIC DNA]</scope>
    <source>
        <strain>W106-1 / CGMCC3.15140</strain>
    </source>
</reference>